<name>TRHO_STRZT</name>
<sequence>MAKDIRVLLYYLYTPIENAEQFAADHLAFCKSIGLKGRILVADEGINGTVSGDYETTQKYMDYVHSLPGMEDLWFKIDEESEQAFKKMFVRYKKEIVHLGLEDNDFDNDINPLETTGAYLSPKEFKEALLDKDTVVLDTRNDYEYDLGHFRGAIRPDIRNFRELPQWVRDNKEKFMDKRVVVYCTGGVRCEKFSGWMVREGYKDVGQLHGGIATYGKDPEVQGELWDGKMYVFDERIAVDVNHVNPTIVGKDWFDGTPCERYVNCGNPFCNRRILTSEENEDKYLRGCSHECRVHPRNRYVSKNELTQAEVIERLAAIGESLDQAATV</sequence>
<reference key="1">
    <citation type="journal article" date="2010" name="Genome Biol.">
        <title>Structure and dynamics of the pan-genome of Streptococcus pneumoniae and closely related species.</title>
        <authorList>
            <person name="Donati C."/>
            <person name="Hiller N.L."/>
            <person name="Tettelin H."/>
            <person name="Muzzi A."/>
            <person name="Croucher N.J."/>
            <person name="Angiuoli S.V."/>
            <person name="Oggioni M."/>
            <person name="Dunning Hotopp J.C."/>
            <person name="Hu F.Z."/>
            <person name="Riley D.R."/>
            <person name="Covacci A."/>
            <person name="Mitchell T.J."/>
            <person name="Bentley S.D."/>
            <person name="Kilian M."/>
            <person name="Ehrlich G.D."/>
            <person name="Rappuoli R."/>
            <person name="Moxon E.R."/>
            <person name="Masignani V."/>
        </authorList>
    </citation>
    <scope>NUCLEOTIDE SEQUENCE [LARGE SCALE GENOMIC DNA]</scope>
    <source>
        <strain>Taiwan19F-14</strain>
    </source>
</reference>
<proteinExistence type="inferred from homology"/>
<feature type="chain" id="PRO_1000135482" description="tRNA uridine(34) hydroxylase">
    <location>
        <begin position="1"/>
        <end position="328"/>
    </location>
</feature>
<feature type="domain" description="Rhodanese" evidence="1">
    <location>
        <begin position="130"/>
        <end position="224"/>
    </location>
</feature>
<feature type="active site" description="Cysteine persulfide intermediate" evidence="1">
    <location>
        <position position="184"/>
    </location>
</feature>
<organism>
    <name type="scientific">Streptococcus pneumoniae (strain Taiwan19F-14)</name>
    <dbReference type="NCBI Taxonomy" id="487213"/>
    <lineage>
        <taxon>Bacteria</taxon>
        <taxon>Bacillati</taxon>
        <taxon>Bacillota</taxon>
        <taxon>Bacilli</taxon>
        <taxon>Lactobacillales</taxon>
        <taxon>Streptococcaceae</taxon>
        <taxon>Streptococcus</taxon>
    </lineage>
</organism>
<gene>
    <name evidence="1" type="primary">trhO</name>
    <name type="ordered locus">SPT_0125</name>
</gene>
<protein>
    <recommendedName>
        <fullName evidence="1">tRNA uridine(34) hydroxylase</fullName>
        <ecNumber evidence="1">1.14.-.-</ecNumber>
    </recommendedName>
    <alternativeName>
        <fullName evidence="1">tRNA hydroxylation protein O</fullName>
    </alternativeName>
</protein>
<dbReference type="EC" id="1.14.-.-" evidence="1"/>
<dbReference type="EMBL" id="CP000921">
    <property type="protein sequence ID" value="ACO23475.1"/>
    <property type="molecule type" value="Genomic_DNA"/>
</dbReference>
<dbReference type="RefSeq" id="WP_001030029.1">
    <property type="nucleotide sequence ID" value="NC_012469.1"/>
</dbReference>
<dbReference type="SMR" id="C1CNW3"/>
<dbReference type="KEGG" id="snt:SPT_0125"/>
<dbReference type="HOGENOM" id="CLU_038878_1_0_9"/>
<dbReference type="GO" id="GO:0016705">
    <property type="term" value="F:oxidoreductase activity, acting on paired donors, with incorporation or reduction of molecular oxygen"/>
    <property type="evidence" value="ECO:0007669"/>
    <property type="project" value="UniProtKB-UniRule"/>
</dbReference>
<dbReference type="GO" id="GO:0006400">
    <property type="term" value="P:tRNA modification"/>
    <property type="evidence" value="ECO:0007669"/>
    <property type="project" value="UniProtKB-UniRule"/>
</dbReference>
<dbReference type="CDD" id="cd01518">
    <property type="entry name" value="RHOD_YceA"/>
    <property type="match status" value="1"/>
</dbReference>
<dbReference type="Gene3D" id="3.30.70.100">
    <property type="match status" value="1"/>
</dbReference>
<dbReference type="Gene3D" id="3.40.250.10">
    <property type="entry name" value="Rhodanese-like domain"/>
    <property type="match status" value="1"/>
</dbReference>
<dbReference type="HAMAP" id="MF_00469">
    <property type="entry name" value="TrhO"/>
    <property type="match status" value="1"/>
</dbReference>
<dbReference type="InterPro" id="IPR001763">
    <property type="entry name" value="Rhodanese-like_dom"/>
</dbReference>
<dbReference type="InterPro" id="IPR036873">
    <property type="entry name" value="Rhodanese-like_dom_sf"/>
</dbReference>
<dbReference type="InterPro" id="IPR022111">
    <property type="entry name" value="Rhodanese_C"/>
</dbReference>
<dbReference type="InterPro" id="IPR020936">
    <property type="entry name" value="TrhO"/>
</dbReference>
<dbReference type="InterPro" id="IPR040503">
    <property type="entry name" value="TRHO_N"/>
</dbReference>
<dbReference type="NCBIfam" id="NF001135">
    <property type="entry name" value="PRK00142.1-3"/>
    <property type="match status" value="1"/>
</dbReference>
<dbReference type="NCBIfam" id="NF001137">
    <property type="entry name" value="PRK00142.1-5"/>
    <property type="match status" value="1"/>
</dbReference>
<dbReference type="PANTHER" id="PTHR43268:SF3">
    <property type="entry name" value="RHODANESE-LIKE DOMAIN-CONTAINING PROTEIN 7-RELATED"/>
    <property type="match status" value="1"/>
</dbReference>
<dbReference type="PANTHER" id="PTHR43268">
    <property type="entry name" value="THIOSULFATE SULFURTRANSFERASE/RHODANESE-LIKE DOMAIN-CONTAINING PROTEIN 2"/>
    <property type="match status" value="1"/>
</dbReference>
<dbReference type="Pfam" id="PF00581">
    <property type="entry name" value="Rhodanese"/>
    <property type="match status" value="1"/>
</dbReference>
<dbReference type="Pfam" id="PF12368">
    <property type="entry name" value="Rhodanese_C"/>
    <property type="match status" value="1"/>
</dbReference>
<dbReference type="Pfam" id="PF17773">
    <property type="entry name" value="UPF0176_N"/>
    <property type="match status" value="1"/>
</dbReference>
<dbReference type="SMART" id="SM00450">
    <property type="entry name" value="RHOD"/>
    <property type="match status" value="1"/>
</dbReference>
<dbReference type="SUPFAM" id="SSF52821">
    <property type="entry name" value="Rhodanese/Cell cycle control phosphatase"/>
    <property type="match status" value="1"/>
</dbReference>
<dbReference type="PROSITE" id="PS50206">
    <property type="entry name" value="RHODANESE_3"/>
    <property type="match status" value="1"/>
</dbReference>
<keyword id="KW-0560">Oxidoreductase</keyword>
<keyword id="KW-0819">tRNA processing</keyword>
<comment type="function">
    <text evidence="1">Catalyzes oxygen-dependent 5-hydroxyuridine (ho5U) modification at position 34 in tRNAs.</text>
</comment>
<comment type="catalytic activity">
    <reaction evidence="1">
        <text>uridine(34) in tRNA + AH2 + O2 = 5-hydroxyuridine(34) in tRNA + A + H2O</text>
        <dbReference type="Rhea" id="RHEA:64224"/>
        <dbReference type="Rhea" id="RHEA-COMP:11727"/>
        <dbReference type="Rhea" id="RHEA-COMP:13381"/>
        <dbReference type="ChEBI" id="CHEBI:13193"/>
        <dbReference type="ChEBI" id="CHEBI:15377"/>
        <dbReference type="ChEBI" id="CHEBI:15379"/>
        <dbReference type="ChEBI" id="CHEBI:17499"/>
        <dbReference type="ChEBI" id="CHEBI:65315"/>
        <dbReference type="ChEBI" id="CHEBI:136877"/>
    </reaction>
</comment>
<comment type="similarity">
    <text evidence="1">Belongs to the TrhO family.</text>
</comment>
<accession>C1CNW3</accession>
<evidence type="ECO:0000255" key="1">
    <source>
        <dbReference type="HAMAP-Rule" id="MF_00469"/>
    </source>
</evidence>